<reference key="1">
    <citation type="journal article" date="1990" name="Mol. Microbiol.">
        <title>The variable antigens Vmp7 and Vmp21 of the relapsing fever bacterium Borrelia hermsii are structurally analogous to the VSG proteins of the African trypanosome.</title>
        <authorList>
            <person name="Burman N."/>
            <person name="Bergstroem S."/>
            <person name="Restrepo B.I."/>
            <person name="Barbour A.G."/>
        </authorList>
    </citation>
    <scope>NUCLEOTIDE SEQUENCE [GENOMIC DNA]</scope>
    <source>
        <strain>ATCC 35209 / HS1</strain>
        <plasmid>lp7E</plasmid>
    </source>
</reference>
<reference key="2">
    <citation type="journal article" date="1992" name="Mol. Microbiol.">
        <title>Subtelomeric expression regions of Borrelia hermsii linear plasmids are highly polymorphic.</title>
        <authorList>
            <person name="Restrepo B.I."/>
            <person name="Kitten T."/>
            <person name="Carter C.J."/>
            <person name="Infante D."/>
            <person name="Barbour A.G."/>
        </authorList>
    </citation>
    <scope>NUCLEOTIDE SEQUENCE [GENOMIC DNA]</scope>
    <source>
        <strain>ATCC 35209 / HS1</strain>
        <plasmid>bp21E</plasmid>
    </source>
</reference>
<reference key="3">
    <citation type="journal article" date="1985" name="J. Exp. Med.">
        <title>Variable major proteins of Borrelia hermsii. Epitope mapping and partial sequence analysis of CNBr peptides.</title>
        <authorList>
            <person name="Barstad P.A."/>
            <person name="Coligan J.E."/>
            <person name="Raum M.G."/>
            <person name="Barbour A.G."/>
        </authorList>
    </citation>
    <scope>PROTEIN SEQUENCE OF 55-75; 186-208 AND 245-259</scope>
    <scope>SUBCELLULAR LOCATION</scope>
</reference>
<reference key="4">
    <citation type="journal article" date="1990" name="Proc. Natl. Acad. Sci. U.S.A.">
        <title>Juxtaposition of expressed variable antigen genes with a conserved telomere in the bacterium Borrelia hermsii.</title>
        <authorList>
            <person name="Kitten T."/>
            <person name="Barbour A.G."/>
        </authorList>
    </citation>
    <scope>FUNCTION</scope>
    <source>
        <strain>ATCC 35209 / HS1</strain>
        <plasmid>bp21E</plasmid>
    </source>
</reference>
<reference key="5">
    <citation type="journal article" date="1998" name="Infect. Immun.">
        <title>Population structure of the relapsing fever spirochete Borrelia hermsii as indicated by polymorphism of two multigene families that encode immunogenic outer surface lipoproteins.</title>
        <authorList>
            <person name="Hinnebusch B.J."/>
            <person name="Barbour A.G."/>
            <person name="Restrepo B.I."/>
            <person name="Schwan T.G."/>
        </authorList>
    </citation>
    <scope>NOMENCLATURE</scope>
</reference>
<organism>
    <name type="scientific">Borrelia hermsii</name>
    <dbReference type="NCBI Taxonomy" id="140"/>
    <lineage>
        <taxon>Bacteria</taxon>
        <taxon>Pseudomonadati</taxon>
        <taxon>Spirochaetota</taxon>
        <taxon>Spirochaetia</taxon>
        <taxon>Spirochaetales</taxon>
        <taxon>Borreliaceae</taxon>
        <taxon>Borrelia</taxon>
    </lineage>
</organism>
<gene>
    <name evidence="3" type="primary">vlp21</name>
    <name evidence="2" type="synonym">vmp21</name>
</gene>
<proteinExistence type="evidence at protein level"/>
<protein>
    <recommendedName>
        <fullName evidence="3">Variable large protein 21</fullName>
    </recommendedName>
    <alternativeName>
        <fullName evidence="2">Variable major outer membrane lipoprotein 21</fullName>
    </alternativeName>
</protein>
<sequence>MRKRISAIINKLNISIMMMIVVLMIGCGQQPEAGKTGAAGGEKQGAGSLSEVLMEVGKSAENAFYSFLELVSDTLGFTAKSTTKKEDVGGYFNSLGGKLGEASNELEQVAKNSEAGIEKNDASKNPIRSAVNAAKKTLEALKGYLDSLGTVGDSNPVGWASNNAQGAAVDEAELKKAYKALKGIMDTAEGAGVARPEVGNIAVKVGNGTDNKDGAKILATDGAAAVGDAGKAAAILTTVSGKEMLASIVNSTEDKAVKITGNVTVETTPLEFAVGGNGAHLSQNANSKAAAVAGGIALRSLVKGGKLAADNNDDDKASQGVGITAANKLLVAVEDIIKKTVKNVLEKAKGEIDKARDPKPAGQQ</sequence>
<name>VLP21_BORHE</name>
<keyword id="KW-0998">Cell outer membrane</keyword>
<keyword id="KW-0903">Direct protein sequencing</keyword>
<keyword id="KW-0449">Lipoprotein</keyword>
<keyword id="KW-0472">Membrane</keyword>
<keyword id="KW-0564">Palmitate</keyword>
<keyword id="KW-0614">Plasmid</keyword>
<keyword id="KW-0732">Signal</keyword>
<comment type="function">
    <text evidence="1">The Vlp and Vsp proteins are antigenically distinct proteins, only one vlp or vsp gene is transcriptionally active at any one time. Switching between these genes is a mechanism of host immune response evasion.</text>
</comment>
<comment type="subcellular location">
    <subcellularLocation>
        <location evidence="5">Cell outer membrane</location>
        <topology>Lipid-anchor</topology>
    </subcellularLocation>
</comment>
<comment type="miscellaneous">
    <text evidence="6">Genes for both Vlp and Vsp families are on (usually) unnamed linear plasmids in B.hermsii HS1.</text>
</comment>
<comment type="similarity">
    <text evidence="4">Belongs to the variable large protein (Vlp) family. Alpha subfamily.</text>
</comment>
<accession>P21875</accession>
<evidence type="ECO:0000269" key="1">
    <source>
    </source>
</evidence>
<evidence type="ECO:0000303" key="2">
    <source>
    </source>
</evidence>
<evidence type="ECO:0000303" key="3">
    <source>
    </source>
</evidence>
<evidence type="ECO:0000305" key="4"/>
<evidence type="ECO:0000305" key="5">
    <source>
    </source>
</evidence>
<evidence type="ECO:0000305" key="6">
    <source>
    </source>
</evidence>
<geneLocation type="plasmid">
    <name>bp21E</name>
</geneLocation>
<geneLocation type="plasmid">
    <name>lp7E</name>
</geneLocation>
<feature type="signal peptide" evidence="4">
    <location>
        <begin position="1"/>
        <end position="26"/>
    </location>
</feature>
<feature type="chain" id="PRO_0000018089" description="Variable large protein 21">
    <location>
        <begin position="27"/>
        <end position="364"/>
    </location>
</feature>
<feature type="lipid moiety-binding region" description="N-palmitoyl cysteine" evidence="4">
    <location>
        <position position="27"/>
    </location>
</feature>
<feature type="lipid moiety-binding region" description="S-diacylglycerol cysteine" evidence="4">
    <location>
        <position position="27"/>
    </location>
</feature>
<dbReference type="EMBL" id="M57256">
    <property type="protein sequence ID" value="AAB59031.1"/>
    <property type="molecule type" value="Genomic_DNA"/>
</dbReference>
<dbReference type="PIR" id="S11981">
    <property type="entry name" value="S11981"/>
</dbReference>
<dbReference type="SMR" id="P21875"/>
<dbReference type="GO" id="GO:0009279">
    <property type="term" value="C:cell outer membrane"/>
    <property type="evidence" value="ECO:0007669"/>
    <property type="project" value="UniProtKB-SubCell"/>
</dbReference>
<dbReference type="InterPro" id="IPR000680">
    <property type="entry name" value="Borrelia_lipo"/>
</dbReference>
<dbReference type="Pfam" id="PF00921">
    <property type="entry name" value="Lipoprotein_2"/>
    <property type="match status" value="1"/>
</dbReference>
<dbReference type="SUPFAM" id="SSF74748">
    <property type="entry name" value="Variable surface antigen VlsE"/>
    <property type="match status" value="1"/>
</dbReference>
<dbReference type="PROSITE" id="PS51257">
    <property type="entry name" value="PROKAR_LIPOPROTEIN"/>
    <property type="match status" value="1"/>
</dbReference>